<protein>
    <recommendedName>
        <fullName evidence="1">Small ribosomal subunit protein eS17</fullName>
    </recommendedName>
    <alternativeName>
        <fullName evidence="2">30S ribosomal protein S17e</fullName>
    </alternativeName>
</protein>
<keyword id="KW-1185">Reference proteome</keyword>
<keyword id="KW-0687">Ribonucleoprotein</keyword>
<keyword id="KW-0689">Ribosomal protein</keyword>
<reference key="1">
    <citation type="journal article" date="2016" name="Stand. Genomic Sci.">
        <title>Complete genome sequence of the Antarctic Halorubrum lacusprofundi type strain ACAM 34.</title>
        <authorList>
            <person name="Anderson I.J."/>
            <person name="DasSarma P."/>
            <person name="Lucas S."/>
            <person name="Copeland A."/>
            <person name="Lapidus A."/>
            <person name="Del Rio T.G."/>
            <person name="Tice H."/>
            <person name="Dalin E."/>
            <person name="Bruce D.C."/>
            <person name="Goodwin L."/>
            <person name="Pitluck S."/>
            <person name="Sims D."/>
            <person name="Brettin T.S."/>
            <person name="Detter J.C."/>
            <person name="Han C.S."/>
            <person name="Larimer F."/>
            <person name="Hauser L."/>
            <person name="Land M."/>
            <person name="Ivanova N."/>
            <person name="Richardson P."/>
            <person name="Cavicchioli R."/>
            <person name="DasSarma S."/>
            <person name="Woese C.R."/>
            <person name="Kyrpides N.C."/>
        </authorList>
    </citation>
    <scope>NUCLEOTIDE SEQUENCE [LARGE SCALE GENOMIC DNA]</scope>
    <source>
        <strain>ATCC 49239 / DSM 5036 / JCM 8891 / ACAM 34</strain>
    </source>
</reference>
<comment type="similarity">
    <text evidence="1">Belongs to the eukaryotic ribosomal protein eS17 family.</text>
</comment>
<evidence type="ECO:0000255" key="1">
    <source>
        <dbReference type="HAMAP-Rule" id="MF_00511"/>
    </source>
</evidence>
<evidence type="ECO:0000305" key="2"/>
<feature type="chain" id="PRO_1000146100" description="Small ribosomal subunit protein eS17">
    <location>
        <begin position="1"/>
        <end position="64"/>
    </location>
</feature>
<dbReference type="EMBL" id="CP001365">
    <property type="protein sequence ID" value="ACM57914.1"/>
    <property type="molecule type" value="Genomic_DNA"/>
</dbReference>
<dbReference type="RefSeq" id="WP_015911035.1">
    <property type="nucleotide sequence ID" value="NC_012029.1"/>
</dbReference>
<dbReference type="SMR" id="B9LSG7"/>
<dbReference type="GeneID" id="7401955"/>
<dbReference type="KEGG" id="hla:Hlac_2338"/>
<dbReference type="eggNOG" id="arCOG01885">
    <property type="taxonomic scope" value="Archaea"/>
</dbReference>
<dbReference type="HOGENOM" id="CLU_176720_1_0_2"/>
<dbReference type="Proteomes" id="UP000000740">
    <property type="component" value="Chromosome 1"/>
</dbReference>
<dbReference type="GO" id="GO:1990904">
    <property type="term" value="C:ribonucleoprotein complex"/>
    <property type="evidence" value="ECO:0007669"/>
    <property type="project" value="UniProtKB-KW"/>
</dbReference>
<dbReference type="GO" id="GO:0005840">
    <property type="term" value="C:ribosome"/>
    <property type="evidence" value="ECO:0007669"/>
    <property type="project" value="UniProtKB-KW"/>
</dbReference>
<dbReference type="GO" id="GO:0003735">
    <property type="term" value="F:structural constituent of ribosome"/>
    <property type="evidence" value="ECO:0007669"/>
    <property type="project" value="InterPro"/>
</dbReference>
<dbReference type="GO" id="GO:0006412">
    <property type="term" value="P:translation"/>
    <property type="evidence" value="ECO:0007669"/>
    <property type="project" value="UniProtKB-UniRule"/>
</dbReference>
<dbReference type="Gene3D" id="1.10.60.20">
    <property type="entry name" value="Ribosomal protein S17e-like"/>
    <property type="match status" value="1"/>
</dbReference>
<dbReference type="HAMAP" id="MF_00511">
    <property type="entry name" value="Ribosomal_eS17"/>
    <property type="match status" value="1"/>
</dbReference>
<dbReference type="InterPro" id="IPR001210">
    <property type="entry name" value="Ribosomal_eS17"/>
</dbReference>
<dbReference type="InterPro" id="IPR036401">
    <property type="entry name" value="Ribosomal_eS17_sf"/>
</dbReference>
<dbReference type="NCBIfam" id="NF002242">
    <property type="entry name" value="PRK01151.1"/>
    <property type="match status" value="1"/>
</dbReference>
<dbReference type="PANTHER" id="PTHR10732">
    <property type="entry name" value="40S RIBOSOMAL PROTEIN S17"/>
    <property type="match status" value="1"/>
</dbReference>
<dbReference type="PANTHER" id="PTHR10732:SF0">
    <property type="entry name" value="40S RIBOSOMAL PROTEIN S17"/>
    <property type="match status" value="1"/>
</dbReference>
<dbReference type="Pfam" id="PF00833">
    <property type="entry name" value="Ribosomal_S17e"/>
    <property type="match status" value="1"/>
</dbReference>
<dbReference type="SUPFAM" id="SSF116820">
    <property type="entry name" value="Rps17e-like"/>
    <property type="match status" value="1"/>
</dbReference>
<name>RS17E_HALLT</name>
<proteinExistence type="inferred from homology"/>
<sequence>MAIKPKYIKQLGNVLLERYPDSFNTDFETNKDSVTTLTTVESKGVRNRIAGYVTQKKAQAAQKA</sequence>
<accession>B9LSG7</accession>
<gene>
    <name evidence="1" type="primary">rps17e</name>
    <name type="ordered locus">Hlac_2338</name>
</gene>
<organism>
    <name type="scientific">Halorubrum lacusprofundi (strain ATCC 49239 / DSM 5036 / JCM 8891 / ACAM 34)</name>
    <dbReference type="NCBI Taxonomy" id="416348"/>
    <lineage>
        <taxon>Archaea</taxon>
        <taxon>Methanobacteriati</taxon>
        <taxon>Methanobacteriota</taxon>
        <taxon>Stenosarchaea group</taxon>
        <taxon>Halobacteria</taxon>
        <taxon>Halobacteriales</taxon>
        <taxon>Haloferacaceae</taxon>
        <taxon>Halorubrum</taxon>
    </lineage>
</organism>